<reference key="1">
    <citation type="journal article" date="2018" name="Front. Cell. Infect. Microbiol.">
        <title>The immunological regulation roles of porcine beta-1, 4 Galactosyltransferase V (B4GALT5) in PRRSV Infection.</title>
        <authorList>
            <person name="Zhang L."/>
            <person name="Ren J."/>
            <person name="Shi P."/>
            <person name="Lu D."/>
            <person name="Zhao C."/>
            <person name="Su Y."/>
            <person name="Zhang L."/>
            <person name="Huang J."/>
        </authorList>
    </citation>
    <scope>NUCLEOTIDE SEQUENCE [MRNA]</scope>
    <scope>FUNCTION (MICROBIAL INFECTION)</scope>
    <scope>SUBCELLULAR LOCATION</scope>
    <scope>INTERACTION WITH PORCINE REPRODUCTIVE AND RESPIRATORY SYNDROME VIRUS GP5 (MICROBIAL INFECTION)</scope>
    <scope>INDUCTION (MICROBIAL INFECTION)</scope>
    <source>
        <tissue>Alveolar macrophage</tissue>
    </source>
</reference>
<reference key="2">
    <citation type="submission" date="2009-11" db="EMBL/GenBank/DDBJ databases">
        <authorList>
            <consortium name="Porcine genome sequencing project"/>
        </authorList>
    </citation>
    <scope>NUCLEOTIDE SEQUENCE [LARGE SCALE GENOMIC DNA]</scope>
</reference>
<evidence type="ECO:0000250" key="1">
    <source>
        <dbReference type="UniProtKB" id="O43286"/>
    </source>
</evidence>
<evidence type="ECO:0000250" key="2">
    <source>
        <dbReference type="UniProtKB" id="P15291"/>
    </source>
</evidence>
<evidence type="ECO:0000250" key="3">
    <source>
        <dbReference type="UniProtKB" id="Q9JMK0"/>
    </source>
</evidence>
<evidence type="ECO:0000250" key="4">
    <source>
        <dbReference type="UniProtKB" id="Q9UBV7"/>
    </source>
</evidence>
<evidence type="ECO:0000250" key="5">
    <source>
        <dbReference type="UniProtKB" id="Q9UBX8"/>
    </source>
</evidence>
<evidence type="ECO:0000255" key="6"/>
<evidence type="ECO:0000269" key="7">
    <source>
    </source>
</evidence>
<evidence type="ECO:0000305" key="8"/>
<organism>
    <name type="scientific">Sus scrofa</name>
    <name type="common">Pig</name>
    <dbReference type="NCBI Taxonomy" id="9823"/>
    <lineage>
        <taxon>Eukaryota</taxon>
        <taxon>Metazoa</taxon>
        <taxon>Chordata</taxon>
        <taxon>Craniata</taxon>
        <taxon>Vertebrata</taxon>
        <taxon>Euteleostomi</taxon>
        <taxon>Mammalia</taxon>
        <taxon>Eutheria</taxon>
        <taxon>Laurasiatheria</taxon>
        <taxon>Artiodactyla</taxon>
        <taxon>Suina</taxon>
        <taxon>Suidae</taxon>
        <taxon>Sus</taxon>
    </lineage>
</organism>
<accession>A0A1S6M251</accession>
<accession>A0A287B5B9</accession>
<dbReference type="EC" id="2.4.1.-"/>
<dbReference type="EC" id="2.4.1.274" evidence="1"/>
<dbReference type="EMBL" id="KY565579">
    <property type="protein sequence ID" value="AQU14360.1"/>
    <property type="molecule type" value="mRNA"/>
</dbReference>
<dbReference type="EMBL" id="AEMK02000106">
    <property type="status" value="NOT_ANNOTATED_CDS"/>
    <property type="molecule type" value="Genomic_DNA"/>
</dbReference>
<dbReference type="RefSeq" id="XP_003134538.1">
    <property type="nucleotide sequence ID" value="XM_003134490.4"/>
</dbReference>
<dbReference type="SMR" id="A0A1S6M251"/>
<dbReference type="FunCoup" id="A0A1S6M251">
    <property type="interactions" value="304"/>
</dbReference>
<dbReference type="STRING" id="9823.ENSSSCP00000051682"/>
<dbReference type="GlyCosmos" id="A0A1S6M251">
    <property type="glycosylation" value="7 sites, No reported glycans"/>
</dbReference>
<dbReference type="GlyGen" id="A0A1S6M251">
    <property type="glycosylation" value="7 sites"/>
</dbReference>
<dbReference type="PaxDb" id="9823-ENSSSCP00000007952"/>
<dbReference type="Ensembl" id="ENSSSCT00000008169.5">
    <property type="protein sequence ID" value="ENSSSCP00000007952.4"/>
    <property type="gene ID" value="ENSSSCG00000007465.5"/>
</dbReference>
<dbReference type="Ensembl" id="ENSSSCT00025106169.1">
    <property type="protein sequence ID" value="ENSSSCP00025047608.1"/>
    <property type="gene ID" value="ENSSSCG00025076572.1"/>
</dbReference>
<dbReference type="Ensembl" id="ENSSSCT00035034067.1">
    <property type="protein sequence ID" value="ENSSSCP00035013457.1"/>
    <property type="gene ID" value="ENSSSCG00035025847.1"/>
</dbReference>
<dbReference type="Ensembl" id="ENSSSCT00045006200.1">
    <property type="protein sequence ID" value="ENSSSCP00045004194.1"/>
    <property type="gene ID" value="ENSSSCG00045003733.1"/>
</dbReference>
<dbReference type="Ensembl" id="ENSSSCT00055050054.1">
    <property type="protein sequence ID" value="ENSSSCP00055039991.1"/>
    <property type="gene ID" value="ENSSSCG00055025271.1"/>
</dbReference>
<dbReference type="Ensembl" id="ENSSSCT00070034393.1">
    <property type="protein sequence ID" value="ENSSSCP00070028732.1"/>
    <property type="gene ID" value="ENSSSCG00070017416.1"/>
</dbReference>
<dbReference type="Ensembl" id="ENSSSCT00090003016">
    <property type="protein sequence ID" value="ENSSSCP00090001818"/>
    <property type="gene ID" value="ENSSSCG00090001844"/>
</dbReference>
<dbReference type="Ensembl" id="ENSSSCT00105024542">
    <property type="protein sequence ID" value="ENSSSCP00105017478"/>
    <property type="gene ID" value="ENSSSCG00105012499"/>
</dbReference>
<dbReference type="Ensembl" id="ENSSSCT00110042056">
    <property type="protein sequence ID" value="ENSSSCP00110029531"/>
    <property type="gene ID" value="ENSSSCG00110021683"/>
</dbReference>
<dbReference type="Ensembl" id="ENSSSCT00130021946">
    <property type="protein sequence ID" value="ENSSSCP00130015213"/>
    <property type="gene ID" value="ENSSSCG00130013485"/>
</dbReference>
<dbReference type="GeneID" id="100522653"/>
<dbReference type="KEGG" id="ssc:100522653"/>
<dbReference type="CTD" id="9334"/>
<dbReference type="VGNC" id="VGNC:96499">
    <property type="gene designation" value="B4GALT5"/>
</dbReference>
<dbReference type="eggNOG" id="KOG3916">
    <property type="taxonomic scope" value="Eukaryota"/>
</dbReference>
<dbReference type="GeneTree" id="ENSGT00940000158019"/>
<dbReference type="InParanoid" id="A0A1S6M251"/>
<dbReference type="OrthoDB" id="10038994at2759"/>
<dbReference type="BRENDA" id="2.4.1.274">
    <property type="organism ID" value="6170"/>
</dbReference>
<dbReference type="Reactome" id="R-SSC-2022854">
    <property type="pathway name" value="Keratan sulfate biosynthesis"/>
</dbReference>
<dbReference type="Reactome" id="R-SSC-913709">
    <property type="pathway name" value="O-linked glycosylation of mucins"/>
</dbReference>
<dbReference type="Reactome" id="R-SSC-975577">
    <property type="pathway name" value="N-Glycan antennae elongation"/>
</dbReference>
<dbReference type="Reactome" id="R-SSC-9840309">
    <property type="pathway name" value="Glycosphingolipid biosynthesis"/>
</dbReference>
<dbReference type="UniPathway" id="UPA00378"/>
<dbReference type="Proteomes" id="UP000008227">
    <property type="component" value="Chromosome 17"/>
</dbReference>
<dbReference type="Proteomes" id="UP000314985">
    <property type="component" value="Chromosome 17"/>
</dbReference>
<dbReference type="Proteomes" id="UP000694570">
    <property type="component" value="Unplaced"/>
</dbReference>
<dbReference type="Proteomes" id="UP000694571">
    <property type="component" value="Unplaced"/>
</dbReference>
<dbReference type="Proteomes" id="UP000694720">
    <property type="component" value="Unplaced"/>
</dbReference>
<dbReference type="Proteomes" id="UP000694722">
    <property type="component" value="Unplaced"/>
</dbReference>
<dbReference type="Proteomes" id="UP000694723">
    <property type="component" value="Unplaced"/>
</dbReference>
<dbReference type="Proteomes" id="UP000694724">
    <property type="component" value="Unplaced"/>
</dbReference>
<dbReference type="Proteomes" id="UP000694725">
    <property type="component" value="Unplaced"/>
</dbReference>
<dbReference type="Proteomes" id="UP000694726">
    <property type="component" value="Unplaced"/>
</dbReference>
<dbReference type="Proteomes" id="UP000694727">
    <property type="component" value="Unplaced"/>
</dbReference>
<dbReference type="Proteomes" id="UP000694728">
    <property type="component" value="Unplaced"/>
</dbReference>
<dbReference type="Bgee" id="ENSSSCG00000007465">
    <property type="expression patterns" value="Expressed in caecum and 42 other cell types or tissues"/>
</dbReference>
<dbReference type="ExpressionAtlas" id="A0A1S6M251">
    <property type="expression patterns" value="baseline and differential"/>
</dbReference>
<dbReference type="GO" id="GO:0005794">
    <property type="term" value="C:Golgi apparatus"/>
    <property type="evidence" value="ECO:0000314"/>
    <property type="project" value="UniProtKB"/>
</dbReference>
<dbReference type="GO" id="GO:0032580">
    <property type="term" value="C:Golgi cisterna membrane"/>
    <property type="evidence" value="ECO:0007669"/>
    <property type="project" value="UniProtKB-SubCell"/>
</dbReference>
<dbReference type="GO" id="GO:0046872">
    <property type="term" value="F:metal ion binding"/>
    <property type="evidence" value="ECO:0007669"/>
    <property type="project" value="UniProtKB-KW"/>
</dbReference>
<dbReference type="GO" id="GO:0003945">
    <property type="term" value="F:N-acetyllactosamine synthase activity"/>
    <property type="evidence" value="ECO:0007669"/>
    <property type="project" value="Ensembl"/>
</dbReference>
<dbReference type="GO" id="GO:0008489">
    <property type="term" value="F:UDP-galactose:glucosylceramide beta-1,4-galactosyltransferase activity"/>
    <property type="evidence" value="ECO:0000250"/>
    <property type="project" value="UniProtKB"/>
</dbReference>
<dbReference type="GO" id="GO:0005975">
    <property type="term" value="P:carbohydrate metabolic process"/>
    <property type="evidence" value="ECO:0007669"/>
    <property type="project" value="InterPro"/>
</dbReference>
<dbReference type="GO" id="GO:0022010">
    <property type="term" value="P:central nervous system myelination"/>
    <property type="evidence" value="ECO:0000250"/>
    <property type="project" value="UniProtKB"/>
</dbReference>
<dbReference type="GO" id="GO:0021955">
    <property type="term" value="P:central nervous system neuron axonogenesis"/>
    <property type="evidence" value="ECO:0000250"/>
    <property type="project" value="UniProtKB"/>
</dbReference>
<dbReference type="GO" id="GO:0010706">
    <property type="term" value="P:ganglioside biosynthetic process via lactosylceramide"/>
    <property type="evidence" value="ECO:0000250"/>
    <property type="project" value="UniProtKB"/>
</dbReference>
<dbReference type="GO" id="GO:0009101">
    <property type="term" value="P:glycoprotein biosynthetic process"/>
    <property type="evidence" value="ECO:0000318"/>
    <property type="project" value="GO_Central"/>
</dbReference>
<dbReference type="GO" id="GO:0070085">
    <property type="term" value="P:glycosylation"/>
    <property type="evidence" value="ECO:0000314"/>
    <property type="project" value="UniProtKB"/>
</dbReference>
<dbReference type="GO" id="GO:0042551">
    <property type="term" value="P:neuron maturation"/>
    <property type="evidence" value="ECO:0000250"/>
    <property type="project" value="UniProtKB"/>
</dbReference>
<dbReference type="GO" id="GO:0030311">
    <property type="term" value="P:poly-N-acetyllactosamine biosynthetic process"/>
    <property type="evidence" value="ECO:0007669"/>
    <property type="project" value="Ensembl"/>
</dbReference>
<dbReference type="GO" id="GO:0040019">
    <property type="term" value="P:positive regulation of embryonic development"/>
    <property type="evidence" value="ECO:0000250"/>
    <property type="project" value="UniProtKB"/>
</dbReference>
<dbReference type="GO" id="GO:0006486">
    <property type="term" value="P:protein glycosylation"/>
    <property type="evidence" value="ECO:0000250"/>
    <property type="project" value="UniProtKB"/>
</dbReference>
<dbReference type="GO" id="GO:0031647">
    <property type="term" value="P:regulation of protein stability"/>
    <property type="evidence" value="ECO:0000250"/>
    <property type="project" value="UniProtKB"/>
</dbReference>
<dbReference type="CDD" id="cd00899">
    <property type="entry name" value="b4GalT"/>
    <property type="match status" value="1"/>
</dbReference>
<dbReference type="FunFam" id="3.90.550.10:FF:000037">
    <property type="entry name" value="Beta-1,4-galactosyltransferase 6"/>
    <property type="match status" value="1"/>
</dbReference>
<dbReference type="Gene3D" id="3.90.550.10">
    <property type="entry name" value="Spore Coat Polysaccharide Biosynthesis Protein SpsA, Chain A"/>
    <property type="match status" value="1"/>
</dbReference>
<dbReference type="InterPro" id="IPR003859">
    <property type="entry name" value="Galactosyl_T"/>
</dbReference>
<dbReference type="InterPro" id="IPR027791">
    <property type="entry name" value="Galactosyl_T_C"/>
</dbReference>
<dbReference type="InterPro" id="IPR027995">
    <property type="entry name" value="Galactosyl_T_N"/>
</dbReference>
<dbReference type="InterPro" id="IPR029044">
    <property type="entry name" value="Nucleotide-diphossugar_trans"/>
</dbReference>
<dbReference type="PANTHER" id="PTHR19300">
    <property type="entry name" value="BETA-1,4-GALACTOSYLTRANSFERASE"/>
    <property type="match status" value="1"/>
</dbReference>
<dbReference type="PANTHER" id="PTHR19300:SF45">
    <property type="entry name" value="BETA-1,4-GALACTOSYLTRANSFERASE 5"/>
    <property type="match status" value="1"/>
</dbReference>
<dbReference type="Pfam" id="PF02709">
    <property type="entry name" value="Glyco_transf_7C"/>
    <property type="match status" value="1"/>
</dbReference>
<dbReference type="Pfam" id="PF13733">
    <property type="entry name" value="Glyco_transf_7N"/>
    <property type="match status" value="1"/>
</dbReference>
<dbReference type="PRINTS" id="PR02050">
    <property type="entry name" value="B14GALTRFASE"/>
</dbReference>
<dbReference type="SUPFAM" id="SSF53448">
    <property type="entry name" value="Nucleotide-diphospho-sugar transferases"/>
    <property type="match status" value="1"/>
</dbReference>
<gene>
    <name type="primary">B4GALT5</name>
</gene>
<comment type="function">
    <text evidence="3">Catalyzes the synthesis of lactosylceramide (LacCer) via the transfer of galactose from UDP-galactose to glucosylceramide (GlcCer) (By similarity). LacCer is the starting point in the biosynthesis of all gangliosides (membrane-bound glycosphingolipids) which play pivotal roles in the CNS including neuronal maturation and axonal and myelin formation (By similarity). Plays a role in the glycosylation of BMPR1A and regulation of its protein stability (By similarity). Essential for extraembryonic development during early embryogenesis (By similarity).</text>
</comment>
<comment type="function">
    <text evidence="7">(Microbial infection) May play a role in the glycosylation of porcine reproductive and respiratory syndrome virus GP5 protein and may be involved in the regulation of viral proliferation.</text>
</comment>
<comment type="catalytic activity">
    <reaction evidence="3">
        <text>a beta-D-glucosyl-(1&lt;-&gt;1')-N-acylsphing-4-enine + UDP-alpha-D-galactose = a beta-D-Gal-(1-&gt;4)-beta-D-Glc-(1&lt;-&gt;1)-Cer(d18:1(4E)) + UDP + H(+)</text>
        <dbReference type="Rhea" id="RHEA:31495"/>
        <dbReference type="ChEBI" id="CHEBI:15378"/>
        <dbReference type="ChEBI" id="CHEBI:17950"/>
        <dbReference type="ChEBI" id="CHEBI:22801"/>
        <dbReference type="ChEBI" id="CHEBI:58223"/>
        <dbReference type="ChEBI" id="CHEBI:66914"/>
        <dbReference type="EC" id="2.4.1.274"/>
    </reaction>
    <physiologicalReaction direction="left-to-right" evidence="3">
        <dbReference type="Rhea" id="RHEA:31496"/>
    </physiologicalReaction>
</comment>
<comment type="cofactor">
    <cofactor evidence="5">
        <name>Mn(2+)</name>
        <dbReference type="ChEBI" id="CHEBI:29035"/>
    </cofactor>
</comment>
<comment type="pathway">
    <text>Protein modification; protein glycosylation.</text>
</comment>
<comment type="pathway">
    <text>Sphingolipid metabolism.</text>
</comment>
<comment type="subunit">
    <text evidence="7">(Microbial infection) Interacts with porcine reproductive and respiratory syndrome virus GP5.</text>
</comment>
<comment type="subcellular location">
    <subcellularLocation>
        <location evidence="2">Golgi apparatus</location>
        <location evidence="2">Golgi stack membrane</location>
        <topology>Single-pass type II membrane protein</topology>
    </subcellularLocation>
    <subcellularLocation>
        <location evidence="7">Golgi apparatus</location>
    </subcellularLocation>
    <text evidence="2">Trans cisternae of Golgi stack.</text>
</comment>
<comment type="induction">
    <text evidence="7">(Microbial infection) Up-regulated in response to porcine reproductive and respiratory syndrome viral infection.</text>
</comment>
<comment type="similarity">
    <text evidence="8">Belongs to the glycosyltransferase 7 family.</text>
</comment>
<sequence length="388" mass="45046">MRVRRGLLRLPRRSLLAALFFFSLSSSLLYFVYVAPGIVNTYLFMMQAQGILIRDNMRTIGAQVYEQVVRSAYAKRNSSVNDSDYPLDLNHSETFLQTTTFLPEDFTYFANHTCPERLPSMKGPIDINMSEIGMDTIHELFSKDPAIKLGGHWKPSDCVPRWKVAILIPFRNRHEHLPVLLRHLIPMLQRQRLQFAFYVVEQVGTQPFNRAMLFNVGFQEAMKDLDWDCLVFHDVDHIPENDRNYYGCGQMPRHFATKLDKYMYLLPYNEFFGGVSGLTVEQFRKINGFPNAFWGWGGEDDDLWNRVQNAGYSVSRPEGDTGKYKSIPYHHRGEVQFLGRYALLRKSKERQGLDGLNNLNYFANITYDALYKNITVNLTPELAQVTEY</sequence>
<keyword id="KW-1015">Disulfide bond</keyword>
<keyword id="KW-0325">Glycoprotein</keyword>
<keyword id="KW-0328">Glycosyltransferase</keyword>
<keyword id="KW-0333">Golgi apparatus</keyword>
<keyword id="KW-0444">Lipid biosynthesis</keyword>
<keyword id="KW-0443">Lipid metabolism</keyword>
<keyword id="KW-0464">Manganese</keyword>
<keyword id="KW-0472">Membrane</keyword>
<keyword id="KW-0479">Metal-binding</keyword>
<keyword id="KW-1185">Reference proteome</keyword>
<keyword id="KW-0735">Signal-anchor</keyword>
<keyword id="KW-0746">Sphingolipid metabolism</keyword>
<keyword id="KW-0808">Transferase</keyword>
<keyword id="KW-0812">Transmembrane</keyword>
<keyword id="KW-1133">Transmembrane helix</keyword>
<feature type="chain" id="PRO_0000446108" description="Beta-1,4-galactosyltransferase 5">
    <location>
        <begin position="1"/>
        <end position="388"/>
    </location>
</feature>
<feature type="topological domain" description="Cytoplasmic" evidence="8">
    <location>
        <begin position="1"/>
        <end position="14"/>
    </location>
</feature>
<feature type="transmembrane region" description="Helical; Signal-anchor for type II membrane protein" evidence="6">
    <location>
        <begin position="15"/>
        <end position="35"/>
    </location>
</feature>
<feature type="topological domain" description="Lumenal" evidence="8">
    <location>
        <begin position="36"/>
        <end position="388"/>
    </location>
</feature>
<feature type="binding site" evidence="4">
    <location>
        <begin position="169"/>
        <end position="173"/>
    </location>
    <ligand>
        <name>UDP-alpha-D-galactose</name>
        <dbReference type="ChEBI" id="CHEBI:66914"/>
    </ligand>
</feature>
<feature type="binding site" evidence="4">
    <location>
        <begin position="208"/>
        <end position="210"/>
    </location>
    <ligand>
        <name>UDP-alpha-D-galactose</name>
        <dbReference type="ChEBI" id="CHEBI:66914"/>
    </ligand>
</feature>
<feature type="binding site" evidence="4">
    <location>
        <begin position="235"/>
        <end position="236"/>
    </location>
    <ligand>
        <name>UDP-alpha-D-galactose</name>
        <dbReference type="ChEBI" id="CHEBI:66914"/>
    </ligand>
</feature>
<feature type="binding site" evidence="4">
    <location>
        <position position="236"/>
    </location>
    <ligand>
        <name>Mn(2+)</name>
        <dbReference type="ChEBI" id="CHEBI:29035"/>
    </ligand>
</feature>
<feature type="binding site" evidence="4">
    <location>
        <position position="264"/>
    </location>
    <ligand>
        <name>UDP-alpha-D-galactose</name>
        <dbReference type="ChEBI" id="CHEBI:66914"/>
    </ligand>
</feature>
<feature type="binding site" evidence="4">
    <location>
        <position position="296"/>
    </location>
    <ligand>
        <name>UDP-alpha-D-galactose</name>
        <dbReference type="ChEBI" id="CHEBI:66914"/>
    </ligand>
</feature>
<feature type="binding site" evidence="4">
    <location>
        <begin position="298"/>
        <end position="301"/>
    </location>
    <ligand>
        <name>N-acetyl-D-glucosamine</name>
        <dbReference type="ChEBI" id="CHEBI:506227"/>
    </ligand>
</feature>
<feature type="binding site" evidence="4">
    <location>
        <begin position="329"/>
        <end position="330"/>
    </location>
    <ligand>
        <name>UDP-alpha-D-galactose</name>
        <dbReference type="ChEBI" id="CHEBI:66914"/>
    </ligand>
</feature>
<feature type="binding site" evidence="4">
    <location>
        <position position="340"/>
    </location>
    <ligand>
        <name>N-acetyl-D-glucosamine</name>
        <dbReference type="ChEBI" id="CHEBI:506227"/>
    </ligand>
</feature>
<feature type="glycosylation site" description="N-linked (GlcNAc...) asparagine" evidence="6">
    <location>
        <position position="77"/>
    </location>
</feature>
<feature type="glycosylation site" description="N-linked (GlcNAc...) asparagine" evidence="6">
    <location>
        <position position="81"/>
    </location>
</feature>
<feature type="glycosylation site" description="N-linked (GlcNAc...) asparagine" evidence="6">
    <location>
        <position position="90"/>
    </location>
</feature>
<feature type="glycosylation site" description="N-linked (GlcNAc...) asparagine" evidence="6">
    <location>
        <position position="111"/>
    </location>
</feature>
<feature type="glycosylation site" description="N-linked (GlcNAc...) asparagine" evidence="6">
    <location>
        <position position="128"/>
    </location>
</feature>
<feature type="glycosylation site" description="N-linked (GlcNAc...) asparagine" evidence="6">
    <location>
        <position position="364"/>
    </location>
</feature>
<feature type="glycosylation site" description="N-linked (GlcNAc...) asparagine" evidence="6">
    <location>
        <position position="373"/>
    </location>
</feature>
<feature type="disulfide bond" evidence="2">
    <location>
        <begin position="114"/>
        <end position="158"/>
    </location>
</feature>
<feature type="disulfide bond" evidence="2">
    <location>
        <begin position="229"/>
        <end position="248"/>
    </location>
</feature>
<feature type="sequence conflict" description="In Ref. 1; AQU14360." evidence="8" ref="1">
    <original>M</original>
    <variation>T</variation>
    <location>
        <position position="57"/>
    </location>
</feature>
<proteinExistence type="evidence at protein level"/>
<protein>
    <recommendedName>
        <fullName evidence="8">Beta-1,4-galactosyltransferase 5</fullName>
        <shortName>Beta-1,4-GalTase 5</shortName>
        <shortName>Beta4Gal-T5</shortName>
        <shortName>b4Gal-T5</shortName>
        <ecNumber>2.4.1.-</ecNumber>
    </recommendedName>
    <alternativeName>
        <fullName evidence="1">Beta-1,4-GalT II</fullName>
    </alternativeName>
    <alternativeName>
        <fullName>Glucosylceramide beta-1,4-galactosyltransferase</fullName>
        <ecNumber evidence="1">2.4.1.274</ecNumber>
    </alternativeName>
    <alternativeName>
        <fullName evidence="1">Lactosylceramide synthase</fullName>
        <shortName evidence="1">LacCer synthase</shortName>
    </alternativeName>
    <alternativeName>
        <fullName>UDP-Gal:beta-GlcNAc beta-1,4-galactosyltransferase 5</fullName>
    </alternativeName>
    <alternativeName>
        <fullName>UDP-galactose:beta-N-acetylglucosamine beta-1,4-galactosyltransferase 5</fullName>
    </alternativeName>
</protein>
<name>B4GT5_PIG</name>